<protein>
    <recommendedName>
        <fullName>ATP synthase subunit delta, mitochondrial</fullName>
    </recommendedName>
    <alternativeName>
        <fullName>F-ATPase delta subunit</fullName>
    </alternativeName>
</protein>
<reference key="1">
    <citation type="journal article" date="1997" name="Microbiology">
        <title>Isolation of developmentally regulated genes from the edible mushroom Agaricus bisporus.</title>
        <authorList>
            <person name="De Groot P.W.J."/>
            <person name="Schaap P.J."/>
            <person name="Van Griensven L.J.L.D."/>
            <person name="Visser J."/>
        </authorList>
    </citation>
    <scope>NUCLEOTIDE SEQUENCE [MRNA]</scope>
    <source>
        <strain>Horst U1</strain>
    </source>
</reference>
<proteinExistence type="evidence at transcript level"/>
<dbReference type="EMBL" id="Z82020">
    <property type="protein sequence ID" value="CAB04785.1"/>
    <property type="molecule type" value="mRNA"/>
</dbReference>
<dbReference type="SMR" id="Q92196"/>
<dbReference type="GO" id="GO:0005743">
    <property type="term" value="C:mitochondrial inner membrane"/>
    <property type="evidence" value="ECO:0007669"/>
    <property type="project" value="UniProtKB-SubCell"/>
</dbReference>
<dbReference type="GO" id="GO:0045259">
    <property type="term" value="C:proton-transporting ATP synthase complex"/>
    <property type="evidence" value="ECO:0007669"/>
    <property type="project" value="UniProtKB-KW"/>
</dbReference>
<dbReference type="GO" id="GO:0046933">
    <property type="term" value="F:proton-transporting ATP synthase activity, rotational mechanism"/>
    <property type="evidence" value="ECO:0007669"/>
    <property type="project" value="InterPro"/>
</dbReference>
<dbReference type="CDD" id="cd12152">
    <property type="entry name" value="F1-ATPase_delta"/>
    <property type="match status" value="1"/>
</dbReference>
<dbReference type="FunFam" id="2.60.15.10:FF:000003">
    <property type="entry name" value="ATP synthase subunit delta, mitochondrial"/>
    <property type="match status" value="1"/>
</dbReference>
<dbReference type="Gene3D" id="6.10.140.880">
    <property type="match status" value="1"/>
</dbReference>
<dbReference type="Gene3D" id="2.60.15.10">
    <property type="entry name" value="F0F1 ATP synthase delta/epsilon subunit, N-terminal"/>
    <property type="match status" value="1"/>
</dbReference>
<dbReference type="HAMAP" id="MF_00530">
    <property type="entry name" value="ATP_synth_epsil_bac"/>
    <property type="match status" value="1"/>
</dbReference>
<dbReference type="InterPro" id="IPR001469">
    <property type="entry name" value="ATP_synth_F1_dsu/esu"/>
</dbReference>
<dbReference type="InterPro" id="IPR020546">
    <property type="entry name" value="ATP_synth_F1_dsu/esu_N"/>
</dbReference>
<dbReference type="InterPro" id="IPR036771">
    <property type="entry name" value="ATPsynth_dsu/esu_N"/>
</dbReference>
<dbReference type="PANTHER" id="PTHR13822">
    <property type="entry name" value="ATP SYNTHASE DELTA/EPSILON CHAIN"/>
    <property type="match status" value="1"/>
</dbReference>
<dbReference type="PANTHER" id="PTHR13822:SF7">
    <property type="entry name" value="ATP SYNTHASE SUBUNIT DELTA, MITOCHONDRIAL"/>
    <property type="match status" value="1"/>
</dbReference>
<dbReference type="Pfam" id="PF02823">
    <property type="entry name" value="ATP-synt_DE_N"/>
    <property type="match status" value="1"/>
</dbReference>
<dbReference type="SUPFAM" id="SSF51344">
    <property type="entry name" value="Epsilon subunit of F1F0-ATP synthase N-terminal domain"/>
    <property type="match status" value="1"/>
</dbReference>
<organism>
    <name type="scientific">Agaricus bisporus</name>
    <name type="common">White button mushroom</name>
    <dbReference type="NCBI Taxonomy" id="5341"/>
    <lineage>
        <taxon>Eukaryota</taxon>
        <taxon>Fungi</taxon>
        <taxon>Dikarya</taxon>
        <taxon>Basidiomycota</taxon>
        <taxon>Agaricomycotina</taxon>
        <taxon>Agaricomycetes</taxon>
        <taxon>Agaricomycetidae</taxon>
        <taxon>Agaricales</taxon>
        <taxon>Agaricineae</taxon>
        <taxon>Agaricaceae</taxon>
        <taxon>Agaricus</taxon>
    </lineage>
</organism>
<gene>
    <name type="primary">atpD</name>
</gene>
<keyword id="KW-0066">ATP synthesis</keyword>
<keyword id="KW-0139">CF(1)</keyword>
<keyword id="KW-0375">Hydrogen ion transport</keyword>
<keyword id="KW-0406">Ion transport</keyword>
<keyword id="KW-0472">Membrane</keyword>
<keyword id="KW-0496">Mitochondrion</keyword>
<keyword id="KW-0999">Mitochondrion inner membrane</keyword>
<keyword id="KW-0809">Transit peptide</keyword>
<keyword id="KW-0813">Transport</keyword>
<comment type="function">
    <text>Mitochondrial membrane ATP synthase (F(1)F(0) ATP synthase or Complex V) produces ATP from ADP in the presence of a proton gradient across the membrane which is generated by electron transport complexes of the respiratory chain. F-type ATPases consist of two structural domains, F(1) - containing the extramembraneous catalytic core, and F(0) - containing the membrane proton channel, linked together by a central stalk and a peripheral stalk. During catalysis, ATP turnover in the catalytic domain of F(1) is coupled via a rotary mechanism of the central stalk subunits to proton translocation. Part of the complex F(1) domain and of the central stalk which is part of the complex rotary element. Rotation of the central stalk against the surrounding alpha(3)beta(3) subunits leads to hydrolysis of ATP in three separate catalytic sites on the beta subunits.</text>
</comment>
<comment type="subunit">
    <text>F-type ATPases have 2 components, CF(1) - the catalytic core - and CF(0) - the membrane proton channel. CF(1) has five subunits: alpha(3), beta(3), gamma(1), delta(1), epsilon(1). CF(0) has three main subunits: a, b and c.</text>
</comment>
<comment type="subcellular location">
    <subcellularLocation>
        <location>Mitochondrion</location>
    </subcellularLocation>
    <subcellularLocation>
        <location>Mitochondrion inner membrane</location>
    </subcellularLocation>
</comment>
<comment type="similarity">
    <text evidence="2">Belongs to the ATPase epsilon chain family.</text>
</comment>
<feature type="transit peptide" description="Mitochondrion" evidence="1">
    <location>
        <begin position="1"/>
        <end position="25"/>
    </location>
</feature>
<feature type="chain" id="PRO_0000002666" description="ATP synthase subunit delta, mitochondrial">
    <location>
        <begin position="26"/>
        <end position="162"/>
    </location>
</feature>
<evidence type="ECO:0000255" key="1"/>
<evidence type="ECO:0000305" key="2"/>
<name>ATPD_AGABI</name>
<accession>Q92196</accession>
<sequence length="162" mass="17364">MSSLRLLASAARRATTHVAYTRRGYAEISDKLKLSLALPHKAIFSSQDVVQVNIPAESGDMGILSSHVPSIEPLRPGVVEVVEDSGSQKWFVSGGFATVHPNNRLTINVVEAAPLEDFSIEAIRANLQEANKVAAGSGSEADKMEAQIEAEVYEALQHALAK</sequence>